<proteinExistence type="inferred from homology"/>
<organism>
    <name type="scientific">Thermotoga neapolitana (strain ATCC 49049 / DSM 4359 / NBRC 107923 / NS-E)</name>
    <dbReference type="NCBI Taxonomy" id="309803"/>
    <lineage>
        <taxon>Bacteria</taxon>
        <taxon>Thermotogati</taxon>
        <taxon>Thermotogota</taxon>
        <taxon>Thermotogae</taxon>
        <taxon>Thermotogales</taxon>
        <taxon>Thermotogaceae</taxon>
        <taxon>Thermotoga</taxon>
    </lineage>
</organism>
<dbReference type="EC" id="3.5.4.16" evidence="1"/>
<dbReference type="EMBL" id="CP000916">
    <property type="protein sequence ID" value="ACM22828.1"/>
    <property type="molecule type" value="Genomic_DNA"/>
</dbReference>
<dbReference type="RefSeq" id="WP_015919147.1">
    <property type="nucleotide sequence ID" value="NC_011978.1"/>
</dbReference>
<dbReference type="SMR" id="B9K795"/>
<dbReference type="STRING" id="309803.CTN_0652"/>
<dbReference type="KEGG" id="tna:CTN_0652"/>
<dbReference type="eggNOG" id="COG1469">
    <property type="taxonomic scope" value="Bacteria"/>
</dbReference>
<dbReference type="HOGENOM" id="CLU_062816_1_1_0"/>
<dbReference type="UniPathway" id="UPA00848">
    <property type="reaction ID" value="UER00151"/>
</dbReference>
<dbReference type="Proteomes" id="UP000000445">
    <property type="component" value="Chromosome"/>
</dbReference>
<dbReference type="GO" id="GO:0003934">
    <property type="term" value="F:GTP cyclohydrolase I activity"/>
    <property type="evidence" value="ECO:0007669"/>
    <property type="project" value="UniProtKB-UniRule"/>
</dbReference>
<dbReference type="GO" id="GO:0046654">
    <property type="term" value="P:tetrahydrofolate biosynthetic process"/>
    <property type="evidence" value="ECO:0007669"/>
    <property type="project" value="UniProtKB-UniRule"/>
</dbReference>
<dbReference type="Gene3D" id="3.10.270.10">
    <property type="entry name" value="Urate Oxidase"/>
    <property type="match status" value="1"/>
</dbReference>
<dbReference type="HAMAP" id="MF_01527_B">
    <property type="entry name" value="GTP_cyclohydrol_B"/>
    <property type="match status" value="1"/>
</dbReference>
<dbReference type="InterPro" id="IPR022838">
    <property type="entry name" value="GTP_cyclohydrolase_FolE2"/>
</dbReference>
<dbReference type="InterPro" id="IPR003801">
    <property type="entry name" value="GTP_cyclohydrolase_FolE2/MptA"/>
</dbReference>
<dbReference type="NCBIfam" id="NF010200">
    <property type="entry name" value="PRK13674.1-1"/>
    <property type="match status" value="1"/>
</dbReference>
<dbReference type="PANTHER" id="PTHR36445">
    <property type="entry name" value="GTP CYCLOHYDROLASE MPTA"/>
    <property type="match status" value="1"/>
</dbReference>
<dbReference type="PANTHER" id="PTHR36445:SF1">
    <property type="entry name" value="GTP CYCLOHYDROLASE MPTA"/>
    <property type="match status" value="1"/>
</dbReference>
<dbReference type="Pfam" id="PF02649">
    <property type="entry name" value="GCHY-1"/>
    <property type="match status" value="1"/>
</dbReference>
<feature type="chain" id="PRO_1000215394" description="GTP cyclohydrolase FolE2">
    <location>
        <begin position="1"/>
        <end position="259"/>
    </location>
</feature>
<feature type="site" description="May be catalytically important" evidence="1">
    <location>
        <position position="143"/>
    </location>
</feature>
<name>GCH4_THENN</name>
<keyword id="KW-0378">Hydrolase</keyword>
<reference key="1">
    <citation type="submission" date="2007-11" db="EMBL/GenBank/DDBJ databases">
        <title>The genome sequence of the hyperthermophilic bacterium Thermotoga neapolitana.</title>
        <authorList>
            <person name="Lim S.K."/>
            <person name="Kim J.S."/>
            <person name="Cha S.H."/>
            <person name="Park B.C."/>
            <person name="Lee D.S."/>
            <person name="Tae H.S."/>
            <person name="Kim S.-J."/>
            <person name="Kim J.J."/>
            <person name="Park K.J."/>
            <person name="Lee S.Y."/>
        </authorList>
    </citation>
    <scope>NUCLEOTIDE SEQUENCE [LARGE SCALE GENOMIC DNA]</scope>
    <source>
        <strain>ATCC 49049 / DSM 4359 / NBRC 107923 / NS-E</strain>
    </source>
</reference>
<gene>
    <name evidence="1" type="primary">folE2</name>
    <name type="ordered locus">CTN_0652</name>
</gene>
<evidence type="ECO:0000255" key="1">
    <source>
        <dbReference type="HAMAP-Rule" id="MF_01527"/>
    </source>
</evidence>
<sequence length="259" mass="30217">MKDVQNEKDTRMVPLKKVGIKDLSWPLKILLKGDGYQPTVAQISCSVDLHREKRGIHMSRFIEVLNGLEEITPHIFEKVLDDLIVTMEAKRAHLEIRFPYFVWKESPVTRKVSPLKVDCFVEAEKEKNFSFKIGVRVPVHNLCPCSKEISDYGAHNQRAFVEIHVRTRKFIWFEDLVEIAERNASVPLYTLLKRPDEKFVTERAYENPKFVEDVARDVALDLEKDPRITWYRVYVESMESIHNHNAFACVEKGDFVLEG</sequence>
<accession>B9K795</accession>
<comment type="function">
    <text evidence="1">Converts GTP to 7,8-dihydroneopterin triphosphate.</text>
</comment>
<comment type="catalytic activity">
    <reaction evidence="1">
        <text>GTP + H2O = 7,8-dihydroneopterin 3'-triphosphate + formate + H(+)</text>
        <dbReference type="Rhea" id="RHEA:17473"/>
        <dbReference type="ChEBI" id="CHEBI:15377"/>
        <dbReference type="ChEBI" id="CHEBI:15378"/>
        <dbReference type="ChEBI" id="CHEBI:15740"/>
        <dbReference type="ChEBI" id="CHEBI:37565"/>
        <dbReference type="ChEBI" id="CHEBI:58462"/>
        <dbReference type="EC" id="3.5.4.16"/>
    </reaction>
</comment>
<comment type="pathway">
    <text evidence="1">Cofactor biosynthesis; 7,8-dihydroneopterin triphosphate biosynthesis; 7,8-dihydroneopterin triphosphate from GTP: step 1/1.</text>
</comment>
<comment type="similarity">
    <text evidence="1">Belongs to the GTP cyclohydrolase IV family.</text>
</comment>
<protein>
    <recommendedName>
        <fullName evidence="1">GTP cyclohydrolase FolE2</fullName>
        <ecNumber evidence="1">3.5.4.16</ecNumber>
    </recommendedName>
</protein>